<sequence length="354" mass="37530">MLVLGIESSCDETGVALYDTERGLRAHCLHTQMAMHAEYGGVVPELASRDHIRRLVPLTEGCLAQAGASYGDIDAVAFTQGPGLGGALLAGSSYANALALALDKPVIPVHHLEGHLLSPLLAEEKPDFPFVALLVSGGHTQIMAVRGIGDYALLGESVDDAAGEAFDKTAKLLGLPYPGGAKLSELAESGRPEAFVFPRPMIHSDDLQMSFSGLKTAVLTAVEKVRAENGADDIPEQTRNDICRAFQDAVVDVLAAKVKKALLQTGFRTVVVAGGVGANRKLRETFGNMTVQIPTPKGKPKHPSEKVSVFFPPTAYCTDNGAMIAFAGAMHLGKGREVGAFNVRPRWPLSEIVR</sequence>
<protein>
    <recommendedName>
        <fullName evidence="1">tRNA N6-adenosine threonylcarbamoyltransferase</fullName>
        <ecNumber evidence="1">2.3.1.234</ecNumber>
    </recommendedName>
    <alternativeName>
        <fullName evidence="1">N6-L-threonylcarbamoyladenine synthase</fullName>
        <shortName evidence="1">t(6)A synthase</shortName>
    </alternativeName>
    <alternativeName>
        <fullName evidence="1">t(6)A37 threonylcarbamoyladenosine biosynthesis protein TsaD</fullName>
    </alternativeName>
    <alternativeName>
        <fullName evidence="1">tRNA threonylcarbamoyladenosine biosynthesis protein TsaD</fullName>
    </alternativeName>
</protein>
<dbReference type="EC" id="2.3.1.234" evidence="1"/>
<dbReference type="EMBL" id="AL157959">
    <property type="protein sequence ID" value="CAM07923.1"/>
    <property type="molecule type" value="Genomic_DNA"/>
</dbReference>
<dbReference type="PIR" id="C81986">
    <property type="entry name" value="C81986"/>
</dbReference>
<dbReference type="RefSeq" id="WP_002238314.1">
    <property type="nucleotide sequence ID" value="NC_003116.1"/>
</dbReference>
<dbReference type="SMR" id="A1IQ95"/>
<dbReference type="EnsemblBacteria" id="CAM07923">
    <property type="protein sequence ID" value="CAM07923"/>
    <property type="gene ID" value="NMA0661"/>
</dbReference>
<dbReference type="GeneID" id="93386703"/>
<dbReference type="KEGG" id="nma:NMA0661"/>
<dbReference type="HOGENOM" id="CLU_023208_0_0_4"/>
<dbReference type="Proteomes" id="UP000000626">
    <property type="component" value="Chromosome"/>
</dbReference>
<dbReference type="GO" id="GO:0005737">
    <property type="term" value="C:cytoplasm"/>
    <property type="evidence" value="ECO:0007669"/>
    <property type="project" value="UniProtKB-SubCell"/>
</dbReference>
<dbReference type="GO" id="GO:0005506">
    <property type="term" value="F:iron ion binding"/>
    <property type="evidence" value="ECO:0007669"/>
    <property type="project" value="UniProtKB-UniRule"/>
</dbReference>
<dbReference type="GO" id="GO:0061711">
    <property type="term" value="F:N(6)-L-threonylcarbamoyladenine synthase activity"/>
    <property type="evidence" value="ECO:0007669"/>
    <property type="project" value="UniProtKB-EC"/>
</dbReference>
<dbReference type="GO" id="GO:0002949">
    <property type="term" value="P:tRNA threonylcarbamoyladenosine modification"/>
    <property type="evidence" value="ECO:0007669"/>
    <property type="project" value="UniProtKB-UniRule"/>
</dbReference>
<dbReference type="CDD" id="cd24133">
    <property type="entry name" value="ASKHA_NBD_TsaD_bac"/>
    <property type="match status" value="1"/>
</dbReference>
<dbReference type="FunFam" id="3.30.420.40:FF:000040">
    <property type="entry name" value="tRNA N6-adenosine threonylcarbamoyltransferase"/>
    <property type="match status" value="1"/>
</dbReference>
<dbReference type="Gene3D" id="3.30.420.40">
    <property type="match status" value="2"/>
</dbReference>
<dbReference type="HAMAP" id="MF_01445">
    <property type="entry name" value="TsaD"/>
    <property type="match status" value="1"/>
</dbReference>
<dbReference type="InterPro" id="IPR043129">
    <property type="entry name" value="ATPase_NBD"/>
</dbReference>
<dbReference type="InterPro" id="IPR000905">
    <property type="entry name" value="Gcp-like_dom"/>
</dbReference>
<dbReference type="InterPro" id="IPR017861">
    <property type="entry name" value="KAE1/TsaD"/>
</dbReference>
<dbReference type="InterPro" id="IPR022450">
    <property type="entry name" value="TsaD"/>
</dbReference>
<dbReference type="NCBIfam" id="TIGR00329">
    <property type="entry name" value="gcp_kae1"/>
    <property type="match status" value="1"/>
</dbReference>
<dbReference type="NCBIfam" id="TIGR03723">
    <property type="entry name" value="T6A_TsaD_YgjD"/>
    <property type="match status" value="1"/>
</dbReference>
<dbReference type="PANTHER" id="PTHR11735">
    <property type="entry name" value="TRNA N6-ADENOSINE THREONYLCARBAMOYLTRANSFERASE"/>
    <property type="match status" value="1"/>
</dbReference>
<dbReference type="PANTHER" id="PTHR11735:SF6">
    <property type="entry name" value="TRNA N6-ADENOSINE THREONYLCARBAMOYLTRANSFERASE, MITOCHONDRIAL"/>
    <property type="match status" value="1"/>
</dbReference>
<dbReference type="Pfam" id="PF00814">
    <property type="entry name" value="TsaD"/>
    <property type="match status" value="1"/>
</dbReference>
<dbReference type="PRINTS" id="PR00789">
    <property type="entry name" value="OSIALOPTASE"/>
</dbReference>
<dbReference type="SUPFAM" id="SSF53067">
    <property type="entry name" value="Actin-like ATPase domain"/>
    <property type="match status" value="2"/>
</dbReference>
<reference key="1">
    <citation type="journal article" date="2000" name="Nature">
        <title>Complete DNA sequence of a serogroup A strain of Neisseria meningitidis Z2491.</title>
        <authorList>
            <person name="Parkhill J."/>
            <person name="Achtman M."/>
            <person name="James K.D."/>
            <person name="Bentley S.D."/>
            <person name="Churcher C.M."/>
            <person name="Klee S.R."/>
            <person name="Morelli G."/>
            <person name="Basham D."/>
            <person name="Brown D."/>
            <person name="Chillingworth T."/>
            <person name="Davies R.M."/>
            <person name="Davis P."/>
            <person name="Devlin K."/>
            <person name="Feltwell T."/>
            <person name="Hamlin N."/>
            <person name="Holroyd S."/>
            <person name="Jagels K."/>
            <person name="Leather S."/>
            <person name="Moule S."/>
            <person name="Mungall K.L."/>
            <person name="Quail M.A."/>
            <person name="Rajandream M.A."/>
            <person name="Rutherford K.M."/>
            <person name="Simmonds M."/>
            <person name="Skelton J."/>
            <person name="Whitehead S."/>
            <person name="Spratt B.G."/>
            <person name="Barrell B.G."/>
        </authorList>
    </citation>
    <scope>NUCLEOTIDE SEQUENCE [LARGE SCALE GENOMIC DNA]</scope>
    <source>
        <strain>DSM 15465 / Z2491</strain>
    </source>
</reference>
<name>TSAD_NEIMA</name>
<accession>A1IQ95</accession>
<keyword id="KW-0012">Acyltransferase</keyword>
<keyword id="KW-0963">Cytoplasm</keyword>
<keyword id="KW-0408">Iron</keyword>
<keyword id="KW-0479">Metal-binding</keyword>
<keyword id="KW-0808">Transferase</keyword>
<keyword id="KW-0819">tRNA processing</keyword>
<evidence type="ECO:0000255" key="1">
    <source>
        <dbReference type="HAMAP-Rule" id="MF_01445"/>
    </source>
</evidence>
<organism>
    <name type="scientific">Neisseria meningitidis serogroup A / serotype 4A (strain DSM 15465 / Z2491)</name>
    <dbReference type="NCBI Taxonomy" id="122587"/>
    <lineage>
        <taxon>Bacteria</taxon>
        <taxon>Pseudomonadati</taxon>
        <taxon>Pseudomonadota</taxon>
        <taxon>Betaproteobacteria</taxon>
        <taxon>Neisseriales</taxon>
        <taxon>Neisseriaceae</taxon>
        <taxon>Neisseria</taxon>
    </lineage>
</organism>
<proteinExistence type="inferred from homology"/>
<comment type="function">
    <text evidence="1">Required for the formation of a threonylcarbamoyl group on adenosine at position 37 (t(6)A37) in tRNAs that read codons beginning with adenine. Is involved in the transfer of the threonylcarbamoyl moiety of threonylcarbamoyl-AMP (TC-AMP) to the N6 group of A37, together with TsaE and TsaB. TsaD likely plays a direct catalytic role in this reaction.</text>
</comment>
<comment type="catalytic activity">
    <reaction evidence="1">
        <text>L-threonylcarbamoyladenylate + adenosine(37) in tRNA = N(6)-L-threonylcarbamoyladenosine(37) in tRNA + AMP + H(+)</text>
        <dbReference type="Rhea" id="RHEA:37059"/>
        <dbReference type="Rhea" id="RHEA-COMP:10162"/>
        <dbReference type="Rhea" id="RHEA-COMP:10163"/>
        <dbReference type="ChEBI" id="CHEBI:15378"/>
        <dbReference type="ChEBI" id="CHEBI:73682"/>
        <dbReference type="ChEBI" id="CHEBI:74411"/>
        <dbReference type="ChEBI" id="CHEBI:74418"/>
        <dbReference type="ChEBI" id="CHEBI:456215"/>
        <dbReference type="EC" id="2.3.1.234"/>
    </reaction>
</comment>
<comment type="cofactor">
    <cofactor evidence="1">
        <name>Fe(2+)</name>
        <dbReference type="ChEBI" id="CHEBI:29033"/>
    </cofactor>
    <text evidence="1">Binds 1 Fe(2+) ion per subunit.</text>
</comment>
<comment type="subcellular location">
    <subcellularLocation>
        <location evidence="1">Cytoplasm</location>
    </subcellularLocation>
</comment>
<comment type="similarity">
    <text evidence="1">Belongs to the KAE1 / TsaD family.</text>
</comment>
<gene>
    <name evidence="1" type="primary">tsaD</name>
    <name type="synonym">gcp</name>
    <name type="ordered locus">NMA0661</name>
</gene>
<feature type="chain" id="PRO_0000303449" description="tRNA N6-adenosine threonylcarbamoyltransferase">
    <location>
        <begin position="1"/>
        <end position="354"/>
    </location>
</feature>
<feature type="binding site" evidence="1">
    <location>
        <position position="111"/>
    </location>
    <ligand>
        <name>Fe cation</name>
        <dbReference type="ChEBI" id="CHEBI:24875"/>
    </ligand>
</feature>
<feature type="binding site" evidence="1">
    <location>
        <position position="115"/>
    </location>
    <ligand>
        <name>Fe cation</name>
        <dbReference type="ChEBI" id="CHEBI:24875"/>
    </ligand>
</feature>
<feature type="binding site" evidence="1">
    <location>
        <begin position="134"/>
        <end position="138"/>
    </location>
    <ligand>
        <name>substrate</name>
    </ligand>
</feature>
<feature type="binding site" evidence="1">
    <location>
        <position position="167"/>
    </location>
    <ligand>
        <name>substrate</name>
    </ligand>
</feature>
<feature type="binding site" evidence="1">
    <location>
        <position position="180"/>
    </location>
    <ligand>
        <name>substrate</name>
    </ligand>
</feature>
<feature type="binding site" evidence="1">
    <location>
        <position position="279"/>
    </location>
    <ligand>
        <name>substrate</name>
    </ligand>
</feature>
<feature type="binding site" evidence="1">
    <location>
        <position position="319"/>
    </location>
    <ligand>
        <name>Fe cation</name>
        <dbReference type="ChEBI" id="CHEBI:24875"/>
    </ligand>
</feature>